<organism>
    <name type="scientific">Staphylococcus epidermidis (strain ATCC 35984 / DSM 28319 / BCRC 17069 / CCUG 31568 / BM 3577 / RP62A)</name>
    <dbReference type="NCBI Taxonomy" id="176279"/>
    <lineage>
        <taxon>Bacteria</taxon>
        <taxon>Bacillati</taxon>
        <taxon>Bacillota</taxon>
        <taxon>Bacilli</taxon>
        <taxon>Bacillales</taxon>
        <taxon>Staphylococcaceae</taxon>
        <taxon>Staphylococcus</taxon>
    </lineage>
</organism>
<sequence length="122" mass="13150">MIQQETRLKVADNSGAREVLTIKVLGGSGRKTANIGDIIVCTVKNATPGGVVKKGDVVKAVVVRTKSGVRREDGSYIKFDENACVIIRDDKGPRGTRIFGPVARELREGNFMKIVSLAPEVL</sequence>
<dbReference type="EMBL" id="CP000029">
    <property type="protein sequence ID" value="AAW55153.1"/>
    <property type="molecule type" value="Genomic_DNA"/>
</dbReference>
<dbReference type="RefSeq" id="WP_001829742.1">
    <property type="nucleotide sequence ID" value="NC_002976.3"/>
</dbReference>
<dbReference type="SMR" id="Q5HM09"/>
<dbReference type="STRING" id="176279.SERP1821"/>
<dbReference type="GeneID" id="50018083"/>
<dbReference type="KEGG" id="ser:SERP1821"/>
<dbReference type="eggNOG" id="COG0093">
    <property type="taxonomic scope" value="Bacteria"/>
</dbReference>
<dbReference type="HOGENOM" id="CLU_095071_2_1_9"/>
<dbReference type="Proteomes" id="UP000000531">
    <property type="component" value="Chromosome"/>
</dbReference>
<dbReference type="GO" id="GO:0022625">
    <property type="term" value="C:cytosolic large ribosomal subunit"/>
    <property type="evidence" value="ECO:0007669"/>
    <property type="project" value="TreeGrafter"/>
</dbReference>
<dbReference type="GO" id="GO:0070180">
    <property type="term" value="F:large ribosomal subunit rRNA binding"/>
    <property type="evidence" value="ECO:0007669"/>
    <property type="project" value="TreeGrafter"/>
</dbReference>
<dbReference type="GO" id="GO:0003735">
    <property type="term" value="F:structural constituent of ribosome"/>
    <property type="evidence" value="ECO:0007669"/>
    <property type="project" value="InterPro"/>
</dbReference>
<dbReference type="GO" id="GO:0006412">
    <property type="term" value="P:translation"/>
    <property type="evidence" value="ECO:0007669"/>
    <property type="project" value="UniProtKB-UniRule"/>
</dbReference>
<dbReference type="CDD" id="cd00337">
    <property type="entry name" value="Ribosomal_uL14"/>
    <property type="match status" value="1"/>
</dbReference>
<dbReference type="FunFam" id="2.40.150.20:FF:000001">
    <property type="entry name" value="50S ribosomal protein L14"/>
    <property type="match status" value="1"/>
</dbReference>
<dbReference type="Gene3D" id="2.40.150.20">
    <property type="entry name" value="Ribosomal protein L14"/>
    <property type="match status" value="1"/>
</dbReference>
<dbReference type="HAMAP" id="MF_01367">
    <property type="entry name" value="Ribosomal_uL14"/>
    <property type="match status" value="1"/>
</dbReference>
<dbReference type="InterPro" id="IPR000218">
    <property type="entry name" value="Ribosomal_uL14"/>
</dbReference>
<dbReference type="InterPro" id="IPR005745">
    <property type="entry name" value="Ribosomal_uL14_bac-type"/>
</dbReference>
<dbReference type="InterPro" id="IPR019972">
    <property type="entry name" value="Ribosomal_uL14_CS"/>
</dbReference>
<dbReference type="InterPro" id="IPR036853">
    <property type="entry name" value="Ribosomal_uL14_sf"/>
</dbReference>
<dbReference type="NCBIfam" id="TIGR01067">
    <property type="entry name" value="rplN_bact"/>
    <property type="match status" value="1"/>
</dbReference>
<dbReference type="PANTHER" id="PTHR11761">
    <property type="entry name" value="50S/60S RIBOSOMAL PROTEIN L14/L23"/>
    <property type="match status" value="1"/>
</dbReference>
<dbReference type="PANTHER" id="PTHR11761:SF3">
    <property type="entry name" value="LARGE RIBOSOMAL SUBUNIT PROTEIN UL14M"/>
    <property type="match status" value="1"/>
</dbReference>
<dbReference type="Pfam" id="PF00238">
    <property type="entry name" value="Ribosomal_L14"/>
    <property type="match status" value="1"/>
</dbReference>
<dbReference type="SMART" id="SM01374">
    <property type="entry name" value="Ribosomal_L14"/>
    <property type="match status" value="1"/>
</dbReference>
<dbReference type="SUPFAM" id="SSF50193">
    <property type="entry name" value="Ribosomal protein L14"/>
    <property type="match status" value="1"/>
</dbReference>
<dbReference type="PROSITE" id="PS00049">
    <property type="entry name" value="RIBOSOMAL_L14"/>
    <property type="match status" value="1"/>
</dbReference>
<gene>
    <name evidence="1" type="primary">rplN</name>
    <name type="ordered locus">SERP1821</name>
</gene>
<proteinExistence type="inferred from homology"/>
<feature type="chain" id="PRO_0000224018" description="Large ribosomal subunit protein uL14">
    <location>
        <begin position="1"/>
        <end position="122"/>
    </location>
</feature>
<comment type="function">
    <text evidence="1">Binds to 23S rRNA. Forms part of two intersubunit bridges in the 70S ribosome.</text>
</comment>
<comment type="subunit">
    <text evidence="1">Part of the 50S ribosomal subunit. Forms a cluster with proteins L3 and L19. In the 70S ribosome, L14 and L19 interact and together make contacts with the 16S rRNA in bridges B5 and B8.</text>
</comment>
<comment type="similarity">
    <text evidence="1">Belongs to the universal ribosomal protein uL14 family.</text>
</comment>
<reference key="1">
    <citation type="journal article" date="2005" name="J. Bacteriol.">
        <title>Insights on evolution of virulence and resistance from the complete genome analysis of an early methicillin-resistant Staphylococcus aureus strain and a biofilm-producing methicillin-resistant Staphylococcus epidermidis strain.</title>
        <authorList>
            <person name="Gill S.R."/>
            <person name="Fouts D.E."/>
            <person name="Archer G.L."/>
            <person name="Mongodin E.F."/>
            <person name="DeBoy R.T."/>
            <person name="Ravel J."/>
            <person name="Paulsen I.T."/>
            <person name="Kolonay J.F."/>
            <person name="Brinkac L.M."/>
            <person name="Beanan M.J."/>
            <person name="Dodson R.J."/>
            <person name="Daugherty S.C."/>
            <person name="Madupu R."/>
            <person name="Angiuoli S.V."/>
            <person name="Durkin A.S."/>
            <person name="Haft D.H."/>
            <person name="Vamathevan J.J."/>
            <person name="Khouri H."/>
            <person name="Utterback T.R."/>
            <person name="Lee C."/>
            <person name="Dimitrov G."/>
            <person name="Jiang L."/>
            <person name="Qin H."/>
            <person name="Weidman J."/>
            <person name="Tran K."/>
            <person name="Kang K.H."/>
            <person name="Hance I.R."/>
            <person name="Nelson K.E."/>
            <person name="Fraser C.M."/>
        </authorList>
    </citation>
    <scope>NUCLEOTIDE SEQUENCE [LARGE SCALE GENOMIC DNA]</scope>
    <source>
        <strain>ATCC 35984 / DSM 28319 / BCRC 17069 / CCUG 31568 / BM 3577 / RP62A</strain>
    </source>
</reference>
<accession>Q5HM09</accession>
<evidence type="ECO:0000255" key="1">
    <source>
        <dbReference type="HAMAP-Rule" id="MF_01367"/>
    </source>
</evidence>
<evidence type="ECO:0000305" key="2"/>
<name>RL14_STAEQ</name>
<keyword id="KW-1185">Reference proteome</keyword>
<keyword id="KW-0687">Ribonucleoprotein</keyword>
<keyword id="KW-0689">Ribosomal protein</keyword>
<keyword id="KW-0694">RNA-binding</keyword>
<keyword id="KW-0699">rRNA-binding</keyword>
<protein>
    <recommendedName>
        <fullName evidence="1">Large ribosomal subunit protein uL14</fullName>
    </recommendedName>
    <alternativeName>
        <fullName evidence="2">50S ribosomal protein L14</fullName>
    </alternativeName>
</protein>